<proteinExistence type="inferred from homology"/>
<name>FEMB_STAAB</name>
<dbReference type="EC" id="2.3.2.18"/>
<dbReference type="EMBL" id="AJ938182">
    <property type="protein sequence ID" value="CAI80919.1"/>
    <property type="molecule type" value="Genomic_DNA"/>
</dbReference>
<dbReference type="RefSeq" id="WP_000673100.1">
    <property type="nucleotide sequence ID" value="NC_007622.1"/>
</dbReference>
<dbReference type="SMR" id="Q2YXZ4"/>
<dbReference type="KEGG" id="sab:SAB1230"/>
<dbReference type="HOGENOM" id="CLU_048411_1_0_9"/>
<dbReference type="GO" id="GO:0005737">
    <property type="term" value="C:cytoplasm"/>
    <property type="evidence" value="ECO:0007669"/>
    <property type="project" value="UniProtKB-SubCell"/>
</dbReference>
<dbReference type="GO" id="GO:0016755">
    <property type="term" value="F:aminoacyltransferase activity"/>
    <property type="evidence" value="ECO:0007669"/>
    <property type="project" value="InterPro"/>
</dbReference>
<dbReference type="GO" id="GO:0071555">
    <property type="term" value="P:cell wall organization"/>
    <property type="evidence" value="ECO:0007669"/>
    <property type="project" value="UniProtKB-KW"/>
</dbReference>
<dbReference type="GO" id="GO:0009252">
    <property type="term" value="P:peptidoglycan biosynthetic process"/>
    <property type="evidence" value="ECO:0007669"/>
    <property type="project" value="UniProtKB-KW"/>
</dbReference>
<dbReference type="GO" id="GO:0008360">
    <property type="term" value="P:regulation of cell shape"/>
    <property type="evidence" value="ECO:0007669"/>
    <property type="project" value="UniProtKB-KW"/>
</dbReference>
<dbReference type="Gene3D" id="1.20.58.90">
    <property type="match status" value="1"/>
</dbReference>
<dbReference type="Gene3D" id="3.40.630.30">
    <property type="match status" value="2"/>
</dbReference>
<dbReference type="InterPro" id="IPR016181">
    <property type="entry name" value="Acyl_CoA_acyltransferase"/>
</dbReference>
<dbReference type="InterPro" id="IPR003447">
    <property type="entry name" value="FEMABX"/>
</dbReference>
<dbReference type="InterPro" id="IPR050644">
    <property type="entry name" value="PG_Glycine_Bridge_Synth"/>
</dbReference>
<dbReference type="PANTHER" id="PTHR36174:SF2">
    <property type="entry name" value="AMINOACYLTRANSFERASE FEMA"/>
    <property type="match status" value="1"/>
</dbReference>
<dbReference type="PANTHER" id="PTHR36174">
    <property type="entry name" value="LIPID II:GLYCINE GLYCYLTRANSFERASE"/>
    <property type="match status" value="1"/>
</dbReference>
<dbReference type="Pfam" id="PF02388">
    <property type="entry name" value="FemAB"/>
    <property type="match status" value="1"/>
</dbReference>
<dbReference type="SUPFAM" id="SSF55729">
    <property type="entry name" value="Acyl-CoA N-acyltransferases (Nat)"/>
    <property type="match status" value="2"/>
</dbReference>
<dbReference type="PROSITE" id="PS51191">
    <property type="entry name" value="FEMABX"/>
    <property type="match status" value="1"/>
</dbReference>
<protein>
    <recommendedName>
        <fullName>Aminoacyltransferase FemB</fullName>
        <ecNumber>2.3.2.18</ecNumber>
    </recommendedName>
    <alternativeName>
        <fullName>Factor essential for expression of methicillin resistance B</fullName>
    </alternativeName>
    <alternativeName>
        <fullName>N-acetylmuramoyl-L-alanyl-D-glutamyl-L-lysyl-(N6-triglycine)-D-alanyl-D-alanine-diphosphoundecaprenyl-N-acetylglucosamine:glycine glycyltransferase</fullName>
    </alternativeName>
</protein>
<gene>
    <name type="primary">femB</name>
    <name type="ordered locus">SAB1230</name>
</gene>
<sequence>MKFTELTVTEFDNFVQNPSLESHYFQVKENIVTRENDGFEVVLLGIKDDNNKVIAASLFSKIPTMGSYVYYSNRGPVMDFSDLGLVDYYLKELDKYLQQHQCLYVKLDPYWLYHLYDKDIVPFEGREKNDALVNLFKSHGYEHHGFTTEYDTSSQVRWMGVLNLEGKTPETLKKTFDSQRKRNINKAINYGVKVRFLERDEFNLFLDLYRETEERAGFVSKTDDYFYNFIDTYGDKVLVPLAYIDLDEYVLKLQQELNDKENRRDQMMAKENKSDKQMKKIAELDKQIDHDQHELLNASELSKTDGSILNLASGVYFANAYEVNYFSGGSSEKYNQFMGPYMMHWFMINYCFDNGYDRYNFYGLSGDFTENSEDYGVYRFKRGFNVQIEELIGDFYKPIHKVKYWLFTTLDKLRKKLKK</sequence>
<feature type="chain" id="PRO_0000232604" description="Aminoacyltransferase FemB">
    <location>
        <begin position="1"/>
        <end position="419"/>
    </location>
</feature>
<organism>
    <name type="scientific">Staphylococcus aureus (strain bovine RF122 / ET3-1)</name>
    <dbReference type="NCBI Taxonomy" id="273036"/>
    <lineage>
        <taxon>Bacteria</taxon>
        <taxon>Bacillati</taxon>
        <taxon>Bacillota</taxon>
        <taxon>Bacilli</taxon>
        <taxon>Bacillales</taxon>
        <taxon>Staphylococcaceae</taxon>
        <taxon>Staphylococcus</taxon>
    </lineage>
</organism>
<keyword id="KW-0012">Acyltransferase</keyword>
<keyword id="KW-0133">Cell shape</keyword>
<keyword id="KW-0961">Cell wall biogenesis/degradation</keyword>
<keyword id="KW-0963">Cytoplasm</keyword>
<keyword id="KW-0573">Peptidoglycan synthesis</keyword>
<keyword id="KW-0808">Transferase</keyword>
<reference key="1">
    <citation type="journal article" date="2007" name="PLoS ONE">
        <title>Molecular correlates of host specialization in Staphylococcus aureus.</title>
        <authorList>
            <person name="Herron-Olson L."/>
            <person name="Fitzgerald J.R."/>
            <person name="Musser J.M."/>
            <person name="Kapur V."/>
        </authorList>
    </citation>
    <scope>NUCLEOTIDE SEQUENCE [LARGE SCALE GENOMIC DNA]</scope>
    <source>
        <strain>bovine RF122 / ET3-1</strain>
    </source>
</reference>
<comment type="function">
    <text evidence="1">Catalyzes the formation of the pentaglycine interpeptide bridge, which is characteristic of the S.aureus peptidoglycan. Adds glycines 4 and 5 of the pentaglycine bridge, using glycyl-tRNA(Gly) as donor (By similarity).</text>
</comment>
<comment type="catalytic activity">
    <reaction>
        <text>MurNAc-L-Ala-D-isoglutaminyl-L-Lys-(N(6)-tri-Gly)-D-Ala-D-Ala-diphospho-di-trans,octa-cis-undecaprenyl-GlcNAc + 2 glycyl-tRNA(Gly) = MurNAc-L-Ala-D-isoglutaminyl-L-Lys-(N(6)-penta-Gly)-D-Ala-D-Ala-diphospho-di-trans,octa-cis-undecaprenyl-GlcNAc + 2 tRNA(Gly) + 2 H(+)</text>
        <dbReference type="Rhea" id="RHEA:30443"/>
        <dbReference type="Rhea" id="RHEA-COMP:9664"/>
        <dbReference type="Rhea" id="RHEA-COMP:9683"/>
        <dbReference type="ChEBI" id="CHEBI:15378"/>
        <dbReference type="ChEBI" id="CHEBI:62235"/>
        <dbReference type="ChEBI" id="CHEBI:62236"/>
        <dbReference type="ChEBI" id="CHEBI:78442"/>
        <dbReference type="ChEBI" id="CHEBI:78522"/>
        <dbReference type="EC" id="2.3.2.18"/>
    </reaction>
</comment>
<comment type="subunit">
    <text evidence="1">Homodimer. Interacts with FemA (By similarity).</text>
</comment>
<comment type="subcellular location">
    <subcellularLocation>
        <location evidence="1">Cytoplasm</location>
    </subcellularLocation>
</comment>
<comment type="similarity">
    <text evidence="2">Belongs to the FemABX family.</text>
</comment>
<evidence type="ECO:0000250" key="1"/>
<evidence type="ECO:0000305" key="2"/>
<accession>Q2YXZ4</accession>